<proteinExistence type="inferred from homology"/>
<feature type="chain" id="PRO_0000243607" description="Glutamate-1-semialdehyde 2,1-aminomutase">
    <location>
        <begin position="1"/>
        <end position="433"/>
    </location>
</feature>
<feature type="modified residue" description="N6-(pyridoxal phosphate)lysine" evidence="1">
    <location>
        <position position="266"/>
    </location>
</feature>
<comment type="catalytic activity">
    <reaction evidence="1">
        <text>(S)-4-amino-5-oxopentanoate = 5-aminolevulinate</text>
        <dbReference type="Rhea" id="RHEA:14265"/>
        <dbReference type="ChEBI" id="CHEBI:57501"/>
        <dbReference type="ChEBI" id="CHEBI:356416"/>
        <dbReference type="EC" id="5.4.3.8"/>
    </reaction>
</comment>
<comment type="cofactor">
    <cofactor evidence="1">
        <name>pyridoxal 5'-phosphate</name>
        <dbReference type="ChEBI" id="CHEBI:597326"/>
    </cofactor>
</comment>
<comment type="pathway">
    <text evidence="1">Porphyrin-containing compound metabolism; protoporphyrin-IX biosynthesis; 5-aminolevulinate from L-glutamyl-tRNA(Glu): step 2/2.</text>
</comment>
<comment type="subunit">
    <text evidence="1">Homodimer.</text>
</comment>
<comment type="subcellular location">
    <subcellularLocation>
        <location evidence="1">Cytoplasm</location>
    </subcellularLocation>
</comment>
<comment type="similarity">
    <text evidence="1">Belongs to the class-III pyridoxal-phosphate-dependent aminotransferase family. HemL subfamily.</text>
</comment>
<accession>Q4FVC4</accession>
<reference key="1">
    <citation type="journal article" date="2010" name="Appl. Environ. Microbiol.">
        <title>The genome sequence of Psychrobacter arcticus 273-4, a psychroactive Siberian permafrost bacterium, reveals mechanisms for adaptation to low-temperature growth.</title>
        <authorList>
            <person name="Ayala-del-Rio H.L."/>
            <person name="Chain P.S."/>
            <person name="Grzymski J.J."/>
            <person name="Ponder M.A."/>
            <person name="Ivanova N."/>
            <person name="Bergholz P.W."/>
            <person name="Di Bartolo G."/>
            <person name="Hauser L."/>
            <person name="Land M."/>
            <person name="Bakermans C."/>
            <person name="Rodrigues D."/>
            <person name="Klappenbach J."/>
            <person name="Zarka D."/>
            <person name="Larimer F."/>
            <person name="Richardson P."/>
            <person name="Murray A."/>
            <person name="Thomashow M."/>
            <person name="Tiedje J.M."/>
        </authorList>
    </citation>
    <scope>NUCLEOTIDE SEQUENCE [LARGE SCALE GENOMIC DNA]</scope>
    <source>
        <strain>DSM 17307 / VKM B-2377 / 273-4</strain>
    </source>
</reference>
<dbReference type="EC" id="5.4.3.8" evidence="1"/>
<dbReference type="EMBL" id="CP000082">
    <property type="protein sequence ID" value="AAZ18034.1"/>
    <property type="molecule type" value="Genomic_DNA"/>
</dbReference>
<dbReference type="RefSeq" id="WP_011279473.1">
    <property type="nucleotide sequence ID" value="NC_007204.1"/>
</dbReference>
<dbReference type="SMR" id="Q4FVC4"/>
<dbReference type="STRING" id="259536.Psyc_0161"/>
<dbReference type="KEGG" id="par:Psyc_0161"/>
<dbReference type="eggNOG" id="COG0001">
    <property type="taxonomic scope" value="Bacteria"/>
</dbReference>
<dbReference type="HOGENOM" id="CLU_016922_1_5_6"/>
<dbReference type="OrthoDB" id="9801052at2"/>
<dbReference type="UniPathway" id="UPA00251">
    <property type="reaction ID" value="UER00317"/>
</dbReference>
<dbReference type="Proteomes" id="UP000000546">
    <property type="component" value="Chromosome"/>
</dbReference>
<dbReference type="GO" id="GO:0005737">
    <property type="term" value="C:cytoplasm"/>
    <property type="evidence" value="ECO:0007669"/>
    <property type="project" value="UniProtKB-SubCell"/>
</dbReference>
<dbReference type="GO" id="GO:0042286">
    <property type="term" value="F:glutamate-1-semialdehyde 2,1-aminomutase activity"/>
    <property type="evidence" value="ECO:0007669"/>
    <property type="project" value="UniProtKB-UniRule"/>
</dbReference>
<dbReference type="GO" id="GO:0030170">
    <property type="term" value="F:pyridoxal phosphate binding"/>
    <property type="evidence" value="ECO:0007669"/>
    <property type="project" value="InterPro"/>
</dbReference>
<dbReference type="GO" id="GO:0008483">
    <property type="term" value="F:transaminase activity"/>
    <property type="evidence" value="ECO:0007669"/>
    <property type="project" value="InterPro"/>
</dbReference>
<dbReference type="GO" id="GO:0006782">
    <property type="term" value="P:protoporphyrinogen IX biosynthetic process"/>
    <property type="evidence" value="ECO:0007669"/>
    <property type="project" value="UniProtKB-UniRule"/>
</dbReference>
<dbReference type="CDD" id="cd00610">
    <property type="entry name" value="OAT_like"/>
    <property type="match status" value="1"/>
</dbReference>
<dbReference type="FunFam" id="3.40.640.10:FF:000021">
    <property type="entry name" value="Glutamate-1-semialdehyde 2,1-aminomutase"/>
    <property type="match status" value="1"/>
</dbReference>
<dbReference type="Gene3D" id="3.90.1150.10">
    <property type="entry name" value="Aspartate Aminotransferase, domain 1"/>
    <property type="match status" value="1"/>
</dbReference>
<dbReference type="Gene3D" id="3.40.640.10">
    <property type="entry name" value="Type I PLP-dependent aspartate aminotransferase-like (Major domain)"/>
    <property type="match status" value="1"/>
</dbReference>
<dbReference type="HAMAP" id="MF_00375">
    <property type="entry name" value="HemL_aminotrans_3"/>
    <property type="match status" value="1"/>
</dbReference>
<dbReference type="InterPro" id="IPR004639">
    <property type="entry name" value="4pyrrol_synth_GluAld_NH2Trfase"/>
</dbReference>
<dbReference type="InterPro" id="IPR005814">
    <property type="entry name" value="Aminotrans_3"/>
</dbReference>
<dbReference type="InterPro" id="IPR049704">
    <property type="entry name" value="Aminotrans_3_PPA_site"/>
</dbReference>
<dbReference type="InterPro" id="IPR015424">
    <property type="entry name" value="PyrdxlP-dep_Trfase"/>
</dbReference>
<dbReference type="InterPro" id="IPR015421">
    <property type="entry name" value="PyrdxlP-dep_Trfase_major"/>
</dbReference>
<dbReference type="InterPro" id="IPR015422">
    <property type="entry name" value="PyrdxlP-dep_Trfase_small"/>
</dbReference>
<dbReference type="NCBIfam" id="TIGR00713">
    <property type="entry name" value="hemL"/>
    <property type="match status" value="1"/>
</dbReference>
<dbReference type="NCBIfam" id="NF000818">
    <property type="entry name" value="PRK00062.1"/>
    <property type="match status" value="1"/>
</dbReference>
<dbReference type="PANTHER" id="PTHR43713">
    <property type="entry name" value="GLUTAMATE-1-SEMIALDEHYDE 2,1-AMINOMUTASE"/>
    <property type="match status" value="1"/>
</dbReference>
<dbReference type="PANTHER" id="PTHR43713:SF3">
    <property type="entry name" value="GLUTAMATE-1-SEMIALDEHYDE 2,1-AMINOMUTASE 1, CHLOROPLASTIC-RELATED"/>
    <property type="match status" value="1"/>
</dbReference>
<dbReference type="Pfam" id="PF00202">
    <property type="entry name" value="Aminotran_3"/>
    <property type="match status" value="1"/>
</dbReference>
<dbReference type="SUPFAM" id="SSF53383">
    <property type="entry name" value="PLP-dependent transferases"/>
    <property type="match status" value="1"/>
</dbReference>
<dbReference type="PROSITE" id="PS00600">
    <property type="entry name" value="AA_TRANSFER_CLASS_3"/>
    <property type="match status" value="1"/>
</dbReference>
<protein>
    <recommendedName>
        <fullName evidence="1">Glutamate-1-semialdehyde 2,1-aminomutase</fullName>
        <shortName evidence="1">GSA</shortName>
        <ecNumber evidence="1">5.4.3.8</ecNumber>
    </recommendedName>
    <alternativeName>
        <fullName evidence="1">Glutamate-1-semialdehyde aminotransferase</fullName>
        <shortName evidence="1">GSA-AT</shortName>
    </alternativeName>
</protein>
<sequence length="433" mass="46527">MSTKNEQLFAQACKHIPGGVNSPVRAFAGVGGTPIFMHRANGSKIYDTEDNAYIDYVGSWGPMILGHAHPKVIDAVKKAADDGLSFGTPTPFETTVADKICEIVPSVEMIRMTSSGTEATMSAIRLARGYTQRDKIVKFEGCYHGHSDSLLVKAGSGMLDIGEPTSKGVPADFAKHTITIPYNDSQAIKDCFEKWGEEIACVILEPIAGNMNMVIPSQEFHDTLREQCTANNSVLIFDEVMTGFRVGLGGAQAHFGIDPDLTCFGKIIGAGLPVGAFGGKKEVMSCIAPLGGVYQAGTLSGNPLAMRAGIAMFEDLTAEGFYDELAVKVDRLVDGFQAAADKHGINLRTNKLGGMFGMFFVTDGDTAVPQNFDEVTECDMEVFNTFFHGMLDRGIYLAPSAYEAGFMSIKHSDEDIDTSIKAADEIFAEMAKA</sequence>
<gene>
    <name evidence="1" type="primary">hemL</name>
    <name type="ordered locus">Psyc_0161</name>
</gene>
<keyword id="KW-0963">Cytoplasm</keyword>
<keyword id="KW-0413">Isomerase</keyword>
<keyword id="KW-0627">Porphyrin biosynthesis</keyword>
<keyword id="KW-0663">Pyridoxal phosphate</keyword>
<keyword id="KW-1185">Reference proteome</keyword>
<evidence type="ECO:0000255" key="1">
    <source>
        <dbReference type="HAMAP-Rule" id="MF_00375"/>
    </source>
</evidence>
<name>GSA_PSYA2</name>
<organism>
    <name type="scientific">Psychrobacter arcticus (strain DSM 17307 / VKM B-2377 / 273-4)</name>
    <dbReference type="NCBI Taxonomy" id="259536"/>
    <lineage>
        <taxon>Bacteria</taxon>
        <taxon>Pseudomonadati</taxon>
        <taxon>Pseudomonadota</taxon>
        <taxon>Gammaproteobacteria</taxon>
        <taxon>Moraxellales</taxon>
        <taxon>Moraxellaceae</taxon>
        <taxon>Psychrobacter</taxon>
    </lineage>
</organism>